<accession>Q0IZQ2</accession>
<accession>B7EGR1</accession>
<protein>
    <recommendedName>
        <fullName evidence="5">Cysteine--tRNA ligase CPS1 homolog, chloroplastic/mitochondrial</fullName>
        <ecNumber evidence="5">6.1.1.16</ecNumber>
    </recommendedName>
    <alternativeName>
        <fullName evidence="5">Cysteinyl-tRNA synthetase</fullName>
    </alternativeName>
</protein>
<proteinExistence type="evidence at transcript level"/>
<gene>
    <name evidence="6" type="ordered locus">Os09g0556500</name>
    <name type="ordered locus">LOC_Os09g38420</name>
    <name evidence="7" type="ORF">OsJ_30298</name>
</gene>
<reference key="1">
    <citation type="journal article" date="2005" name="Nature">
        <title>The map-based sequence of the rice genome.</title>
        <authorList>
            <consortium name="International rice genome sequencing project (IRGSP)"/>
        </authorList>
    </citation>
    <scope>NUCLEOTIDE SEQUENCE [LARGE SCALE GENOMIC DNA]</scope>
    <source>
        <strain>cv. Nipponbare</strain>
    </source>
</reference>
<reference key="2">
    <citation type="journal article" date="2008" name="Nucleic Acids Res.">
        <title>The rice annotation project database (RAP-DB): 2008 update.</title>
        <authorList>
            <consortium name="The rice annotation project (RAP)"/>
        </authorList>
    </citation>
    <scope>GENOME REANNOTATION</scope>
    <source>
        <strain>cv. Nipponbare</strain>
    </source>
</reference>
<reference key="3">
    <citation type="journal article" date="2013" name="Rice">
        <title>Improvement of the Oryza sativa Nipponbare reference genome using next generation sequence and optical map data.</title>
        <authorList>
            <person name="Kawahara Y."/>
            <person name="de la Bastide M."/>
            <person name="Hamilton J.P."/>
            <person name="Kanamori H."/>
            <person name="McCombie W.R."/>
            <person name="Ouyang S."/>
            <person name="Schwartz D.C."/>
            <person name="Tanaka T."/>
            <person name="Wu J."/>
            <person name="Zhou S."/>
            <person name="Childs K.L."/>
            <person name="Davidson R.M."/>
            <person name="Lin H."/>
            <person name="Quesada-Ocampo L."/>
            <person name="Vaillancourt B."/>
            <person name="Sakai H."/>
            <person name="Lee S.S."/>
            <person name="Kim J."/>
            <person name="Numa H."/>
            <person name="Itoh T."/>
            <person name="Buell C.R."/>
            <person name="Matsumoto T."/>
        </authorList>
    </citation>
    <scope>GENOME REANNOTATION</scope>
    <source>
        <strain>cv. Nipponbare</strain>
    </source>
</reference>
<reference key="4">
    <citation type="journal article" date="2005" name="PLoS Biol.">
        <title>The genomes of Oryza sativa: a history of duplications.</title>
        <authorList>
            <person name="Yu J."/>
            <person name="Wang J."/>
            <person name="Lin W."/>
            <person name="Li S."/>
            <person name="Li H."/>
            <person name="Zhou J."/>
            <person name="Ni P."/>
            <person name="Dong W."/>
            <person name="Hu S."/>
            <person name="Zeng C."/>
            <person name="Zhang J."/>
            <person name="Zhang Y."/>
            <person name="Li R."/>
            <person name="Xu Z."/>
            <person name="Li S."/>
            <person name="Li X."/>
            <person name="Zheng H."/>
            <person name="Cong L."/>
            <person name="Lin L."/>
            <person name="Yin J."/>
            <person name="Geng J."/>
            <person name="Li G."/>
            <person name="Shi J."/>
            <person name="Liu J."/>
            <person name="Lv H."/>
            <person name="Li J."/>
            <person name="Wang J."/>
            <person name="Deng Y."/>
            <person name="Ran L."/>
            <person name="Shi X."/>
            <person name="Wang X."/>
            <person name="Wu Q."/>
            <person name="Li C."/>
            <person name="Ren X."/>
            <person name="Wang J."/>
            <person name="Wang X."/>
            <person name="Li D."/>
            <person name="Liu D."/>
            <person name="Zhang X."/>
            <person name="Ji Z."/>
            <person name="Zhao W."/>
            <person name="Sun Y."/>
            <person name="Zhang Z."/>
            <person name="Bao J."/>
            <person name="Han Y."/>
            <person name="Dong L."/>
            <person name="Ji J."/>
            <person name="Chen P."/>
            <person name="Wu S."/>
            <person name="Liu J."/>
            <person name="Xiao Y."/>
            <person name="Bu D."/>
            <person name="Tan J."/>
            <person name="Yang L."/>
            <person name="Ye C."/>
            <person name="Zhang J."/>
            <person name="Xu J."/>
            <person name="Zhou Y."/>
            <person name="Yu Y."/>
            <person name="Zhang B."/>
            <person name="Zhuang S."/>
            <person name="Wei H."/>
            <person name="Liu B."/>
            <person name="Lei M."/>
            <person name="Yu H."/>
            <person name="Li Y."/>
            <person name="Xu H."/>
            <person name="Wei S."/>
            <person name="He X."/>
            <person name="Fang L."/>
            <person name="Zhang Z."/>
            <person name="Zhang Y."/>
            <person name="Huang X."/>
            <person name="Su Z."/>
            <person name="Tong W."/>
            <person name="Li J."/>
            <person name="Tong Z."/>
            <person name="Li S."/>
            <person name="Ye J."/>
            <person name="Wang L."/>
            <person name="Fang L."/>
            <person name="Lei T."/>
            <person name="Chen C.-S."/>
            <person name="Chen H.-C."/>
            <person name="Xu Z."/>
            <person name="Li H."/>
            <person name="Huang H."/>
            <person name="Zhang F."/>
            <person name="Xu H."/>
            <person name="Li N."/>
            <person name="Zhao C."/>
            <person name="Li S."/>
            <person name="Dong L."/>
            <person name="Huang Y."/>
            <person name="Li L."/>
            <person name="Xi Y."/>
            <person name="Qi Q."/>
            <person name="Li W."/>
            <person name="Zhang B."/>
            <person name="Hu W."/>
            <person name="Zhang Y."/>
            <person name="Tian X."/>
            <person name="Jiao Y."/>
            <person name="Liang X."/>
            <person name="Jin J."/>
            <person name="Gao L."/>
            <person name="Zheng W."/>
            <person name="Hao B."/>
            <person name="Liu S.-M."/>
            <person name="Wang W."/>
            <person name="Yuan L."/>
            <person name="Cao M."/>
            <person name="McDermott J."/>
            <person name="Samudrala R."/>
            <person name="Wang J."/>
            <person name="Wong G.K.-S."/>
            <person name="Yang H."/>
        </authorList>
    </citation>
    <scope>NUCLEOTIDE SEQUENCE [LARGE SCALE GENOMIC DNA]</scope>
    <source>
        <strain>cv. Nipponbare</strain>
    </source>
</reference>
<reference key="5">
    <citation type="journal article" date="2003" name="Science">
        <title>Collection, mapping, and annotation of over 28,000 cDNA clones from japonica rice.</title>
        <authorList>
            <consortium name="The rice full-length cDNA consortium"/>
        </authorList>
    </citation>
    <scope>NUCLEOTIDE SEQUENCE [LARGE SCALE MRNA]</scope>
    <source>
        <strain>cv. Nipponbare</strain>
    </source>
</reference>
<name>CPS11_ORYSJ</name>
<evidence type="ECO:0000250" key="1"/>
<evidence type="ECO:0000250" key="2">
    <source>
        <dbReference type="UniProtKB" id="A0A1D6LAG9"/>
    </source>
</evidence>
<evidence type="ECO:0000250" key="3">
    <source>
        <dbReference type="UniProtKB" id="P21888"/>
    </source>
</evidence>
<evidence type="ECO:0000255" key="4"/>
<evidence type="ECO:0000305" key="5"/>
<evidence type="ECO:0000312" key="6">
    <source>
        <dbReference type="EMBL" id="BAF25813.1"/>
    </source>
</evidence>
<evidence type="ECO:0000312" key="7">
    <source>
        <dbReference type="EMBL" id="EAZ45630.1"/>
    </source>
</evidence>
<dbReference type="EC" id="6.1.1.16" evidence="5"/>
<dbReference type="EMBL" id="AC137592">
    <property type="status" value="NOT_ANNOTATED_CDS"/>
    <property type="molecule type" value="Genomic_DNA"/>
</dbReference>
<dbReference type="EMBL" id="AP008215">
    <property type="protein sequence ID" value="BAF25813.1"/>
    <property type="molecule type" value="Genomic_DNA"/>
</dbReference>
<dbReference type="EMBL" id="AP014965">
    <property type="protein sequence ID" value="BAT09360.1"/>
    <property type="molecule type" value="Genomic_DNA"/>
</dbReference>
<dbReference type="EMBL" id="CM000146">
    <property type="protein sequence ID" value="EAZ45630.1"/>
    <property type="molecule type" value="Genomic_DNA"/>
</dbReference>
<dbReference type="EMBL" id="AK069699">
    <property type="protein sequence ID" value="BAG91558.1"/>
    <property type="status" value="ALT_INIT"/>
    <property type="molecule type" value="mRNA"/>
</dbReference>
<dbReference type="SMR" id="Q0IZQ2"/>
<dbReference type="FunCoup" id="Q0IZQ2">
    <property type="interactions" value="1835"/>
</dbReference>
<dbReference type="STRING" id="39947.Q0IZQ2"/>
<dbReference type="PaxDb" id="39947-Q0IZQ2"/>
<dbReference type="EnsemblPlants" id="Os09t0556500-01">
    <property type="protein sequence ID" value="Os09t0556500-01"/>
    <property type="gene ID" value="Os09g0556500"/>
</dbReference>
<dbReference type="Gramene" id="Os09t0556500-01">
    <property type="protein sequence ID" value="Os09t0556500-01"/>
    <property type="gene ID" value="Os09g0556500"/>
</dbReference>
<dbReference type="KEGG" id="dosa:Os09g0556500"/>
<dbReference type="KEGG" id="osa:4347821"/>
<dbReference type="eggNOG" id="KOG2007">
    <property type="taxonomic scope" value="Eukaryota"/>
</dbReference>
<dbReference type="HOGENOM" id="CLU_013528_0_1_1"/>
<dbReference type="InParanoid" id="Q0IZQ2"/>
<dbReference type="OMA" id="HHENSRS"/>
<dbReference type="OrthoDB" id="438179at2759"/>
<dbReference type="Proteomes" id="UP000000763">
    <property type="component" value="Chromosome 9"/>
</dbReference>
<dbReference type="Proteomes" id="UP000007752">
    <property type="component" value="Chromosome 9"/>
</dbReference>
<dbReference type="Proteomes" id="UP000059680">
    <property type="component" value="Chromosome 9"/>
</dbReference>
<dbReference type="GO" id="GO:0009507">
    <property type="term" value="C:chloroplast"/>
    <property type="evidence" value="ECO:0000250"/>
    <property type="project" value="UniProtKB"/>
</dbReference>
<dbReference type="GO" id="GO:0005737">
    <property type="term" value="C:cytoplasm"/>
    <property type="evidence" value="ECO:0000318"/>
    <property type="project" value="GO_Central"/>
</dbReference>
<dbReference type="GO" id="GO:0005739">
    <property type="term" value="C:mitochondrion"/>
    <property type="evidence" value="ECO:0007669"/>
    <property type="project" value="UniProtKB-SubCell"/>
</dbReference>
<dbReference type="GO" id="GO:0005524">
    <property type="term" value="F:ATP binding"/>
    <property type="evidence" value="ECO:0000318"/>
    <property type="project" value="GO_Central"/>
</dbReference>
<dbReference type="GO" id="GO:0004817">
    <property type="term" value="F:cysteine-tRNA ligase activity"/>
    <property type="evidence" value="ECO:0000318"/>
    <property type="project" value="GO_Central"/>
</dbReference>
<dbReference type="GO" id="GO:0046872">
    <property type="term" value="F:metal ion binding"/>
    <property type="evidence" value="ECO:0007669"/>
    <property type="project" value="UniProtKB-KW"/>
</dbReference>
<dbReference type="GO" id="GO:0042407">
    <property type="term" value="P:cristae formation"/>
    <property type="evidence" value="ECO:0007669"/>
    <property type="project" value="EnsemblPlants"/>
</dbReference>
<dbReference type="GO" id="GO:0006423">
    <property type="term" value="P:cysteinyl-tRNA aminoacylation"/>
    <property type="evidence" value="ECO:0000318"/>
    <property type="project" value="GO_Central"/>
</dbReference>
<dbReference type="GO" id="GO:0010197">
    <property type="term" value="P:polar nucleus fusion"/>
    <property type="evidence" value="ECO:0007669"/>
    <property type="project" value="EnsemblPlants"/>
</dbReference>
<dbReference type="GO" id="GO:0043067">
    <property type="term" value="P:regulation of programmed cell death"/>
    <property type="evidence" value="ECO:0007669"/>
    <property type="project" value="EnsemblPlants"/>
</dbReference>
<dbReference type="GO" id="GO:0006417">
    <property type="term" value="P:regulation of translation"/>
    <property type="evidence" value="ECO:0000250"/>
    <property type="project" value="UniProtKB"/>
</dbReference>
<dbReference type="CDD" id="cd00672">
    <property type="entry name" value="CysRS_core"/>
    <property type="match status" value="1"/>
</dbReference>
<dbReference type="FunFam" id="3.40.50.620:FF:000009">
    <property type="entry name" value="Cysteine--tRNA ligase"/>
    <property type="match status" value="1"/>
</dbReference>
<dbReference type="FunFam" id="1.20.120.1910:FF:000003">
    <property type="entry name" value="Cysteine--tRNA ligase CPS1, chloroplastic/mitochondrial"/>
    <property type="match status" value="1"/>
</dbReference>
<dbReference type="Gene3D" id="1.20.120.1910">
    <property type="entry name" value="Cysteine-tRNA ligase, C-terminal anti-codon recognition domain"/>
    <property type="match status" value="1"/>
</dbReference>
<dbReference type="Gene3D" id="3.40.50.620">
    <property type="entry name" value="HUPs"/>
    <property type="match status" value="1"/>
</dbReference>
<dbReference type="HAMAP" id="MF_00041">
    <property type="entry name" value="Cys_tRNA_synth"/>
    <property type="match status" value="1"/>
</dbReference>
<dbReference type="InterPro" id="IPR015803">
    <property type="entry name" value="Cys-tRNA-ligase"/>
</dbReference>
<dbReference type="InterPro" id="IPR015273">
    <property type="entry name" value="Cys-tRNA-synt_Ia_DALR"/>
</dbReference>
<dbReference type="InterPro" id="IPR024909">
    <property type="entry name" value="Cys-tRNA/MSH_ligase"/>
</dbReference>
<dbReference type="InterPro" id="IPR056411">
    <property type="entry name" value="CysS_C"/>
</dbReference>
<dbReference type="InterPro" id="IPR014729">
    <property type="entry name" value="Rossmann-like_a/b/a_fold"/>
</dbReference>
<dbReference type="InterPro" id="IPR032678">
    <property type="entry name" value="tRNA-synt_1_cat_dom"/>
</dbReference>
<dbReference type="InterPro" id="IPR009080">
    <property type="entry name" value="tRNAsynth_Ia_anticodon-bd"/>
</dbReference>
<dbReference type="NCBIfam" id="TIGR00435">
    <property type="entry name" value="cysS"/>
    <property type="match status" value="1"/>
</dbReference>
<dbReference type="PANTHER" id="PTHR10890:SF25">
    <property type="entry name" value="CYSTEINE--TRNA LIGASE, CHLOROPLASTIC_MITOCHONDRIAL"/>
    <property type="match status" value="1"/>
</dbReference>
<dbReference type="PANTHER" id="PTHR10890">
    <property type="entry name" value="CYSTEINYL-TRNA SYNTHETASE"/>
    <property type="match status" value="1"/>
</dbReference>
<dbReference type="Pfam" id="PF23493">
    <property type="entry name" value="CysS_C"/>
    <property type="match status" value="1"/>
</dbReference>
<dbReference type="Pfam" id="PF09190">
    <property type="entry name" value="DALR_2"/>
    <property type="match status" value="1"/>
</dbReference>
<dbReference type="Pfam" id="PF01406">
    <property type="entry name" value="tRNA-synt_1e"/>
    <property type="match status" value="1"/>
</dbReference>
<dbReference type="PRINTS" id="PR00983">
    <property type="entry name" value="TRNASYNTHCYS"/>
</dbReference>
<dbReference type="SMART" id="SM00840">
    <property type="entry name" value="DALR_2"/>
    <property type="match status" value="1"/>
</dbReference>
<dbReference type="SUPFAM" id="SSF47323">
    <property type="entry name" value="Anticodon-binding domain of a subclass of class I aminoacyl-tRNA synthetases"/>
    <property type="match status" value="1"/>
</dbReference>
<dbReference type="SUPFAM" id="SSF52374">
    <property type="entry name" value="Nucleotidylyl transferase"/>
    <property type="match status" value="1"/>
</dbReference>
<keyword id="KW-0030">Aminoacyl-tRNA synthetase</keyword>
<keyword id="KW-0067">ATP-binding</keyword>
<keyword id="KW-0150">Chloroplast</keyword>
<keyword id="KW-0436">Ligase</keyword>
<keyword id="KW-0479">Metal-binding</keyword>
<keyword id="KW-0496">Mitochondrion</keyword>
<keyword id="KW-0547">Nucleotide-binding</keyword>
<keyword id="KW-0934">Plastid</keyword>
<keyword id="KW-0648">Protein biosynthesis</keyword>
<keyword id="KW-1185">Reference proteome</keyword>
<keyword id="KW-0809">Transit peptide</keyword>
<keyword id="KW-0862">Zinc</keyword>
<feature type="transit peptide" description="Chloroplast and mitochondrion" evidence="4">
    <location>
        <begin position="1"/>
        <end position="42"/>
    </location>
</feature>
<feature type="chain" id="PRO_0000441338" description="Cysteine--tRNA ligase CPS1 homolog, chloroplastic/mitochondrial">
    <location>
        <begin position="43"/>
        <end position="569"/>
    </location>
</feature>
<feature type="short sequence motif" description="'HIGH' region" evidence="5">
    <location>
        <begin position="101"/>
        <end position="111"/>
    </location>
</feature>
<feature type="short sequence motif" description="'KMSKS' region" evidence="5">
    <location>
        <begin position="336"/>
        <end position="340"/>
    </location>
</feature>
<feature type="binding site" evidence="3">
    <location>
        <position position="99"/>
    </location>
    <ligand>
        <name>Zn(2+)</name>
        <dbReference type="ChEBI" id="CHEBI:29105"/>
    </ligand>
</feature>
<feature type="binding site" evidence="3">
    <location>
        <position position="279"/>
    </location>
    <ligand>
        <name>Zn(2+)</name>
        <dbReference type="ChEBI" id="CHEBI:29105"/>
    </ligand>
</feature>
<feature type="binding site" evidence="3">
    <location>
        <position position="304"/>
    </location>
    <ligand>
        <name>Zn(2+)</name>
        <dbReference type="ChEBI" id="CHEBI:29105"/>
    </ligand>
</feature>
<feature type="binding site" evidence="3">
    <location>
        <position position="308"/>
    </location>
    <ligand>
        <name>Zn(2+)</name>
        <dbReference type="ChEBI" id="CHEBI:29105"/>
    </ligand>
</feature>
<feature type="binding site" evidence="1">
    <location>
        <position position="339"/>
    </location>
    <ligand>
        <name>ATP</name>
        <dbReference type="ChEBI" id="CHEBI:30616"/>
    </ligand>
</feature>
<comment type="function">
    <text evidence="2">Nuclear genome-encoded factor required for normal assembly of chloroplast polysomes.</text>
</comment>
<comment type="catalytic activity">
    <reaction evidence="5">
        <text>tRNA(Cys) + L-cysteine + ATP = L-cysteinyl-tRNA(Cys) + AMP + diphosphate</text>
        <dbReference type="Rhea" id="RHEA:17773"/>
        <dbReference type="Rhea" id="RHEA-COMP:9661"/>
        <dbReference type="Rhea" id="RHEA-COMP:9679"/>
        <dbReference type="ChEBI" id="CHEBI:30616"/>
        <dbReference type="ChEBI" id="CHEBI:33019"/>
        <dbReference type="ChEBI" id="CHEBI:35235"/>
        <dbReference type="ChEBI" id="CHEBI:78442"/>
        <dbReference type="ChEBI" id="CHEBI:78517"/>
        <dbReference type="ChEBI" id="CHEBI:456215"/>
        <dbReference type="EC" id="6.1.1.16"/>
    </reaction>
</comment>
<comment type="cofactor">
    <cofactor evidence="3">
        <name>Zn(2+)</name>
        <dbReference type="ChEBI" id="CHEBI:29105"/>
    </cofactor>
    <text evidence="3">Binds 1 zinc ion per subunit.</text>
</comment>
<comment type="subcellular location">
    <subcellularLocation>
        <location evidence="4">Plastid</location>
        <location evidence="4">Chloroplast</location>
    </subcellularLocation>
    <subcellularLocation>
        <location evidence="4">Mitochondrion</location>
    </subcellularLocation>
</comment>
<comment type="similarity">
    <text evidence="5">Belongs to the class-I aminoacyl-tRNA synthetase family.</text>
</comment>
<comment type="sequence caution" evidence="5">
    <conflict type="erroneous initiation">
        <sequence resource="EMBL-CDS" id="BAG91558"/>
    </conflict>
    <text>Truncated N-terminus.</text>
</comment>
<organism>
    <name type="scientific">Oryza sativa subsp. japonica</name>
    <name type="common">Rice</name>
    <dbReference type="NCBI Taxonomy" id="39947"/>
    <lineage>
        <taxon>Eukaryota</taxon>
        <taxon>Viridiplantae</taxon>
        <taxon>Streptophyta</taxon>
        <taxon>Embryophyta</taxon>
        <taxon>Tracheophyta</taxon>
        <taxon>Spermatophyta</taxon>
        <taxon>Magnoliopsida</taxon>
        <taxon>Liliopsida</taxon>
        <taxon>Poales</taxon>
        <taxon>Poaceae</taxon>
        <taxon>BOP clade</taxon>
        <taxon>Oryzoideae</taxon>
        <taxon>Oryzeae</taxon>
        <taxon>Oryzinae</taxon>
        <taxon>Oryza</taxon>
        <taxon>Oryza sativa</taxon>
    </lineage>
</organism>
<sequence>MAAARRAAGLLPLLLSSPSRARLPHRQALALTPPLLRPHRLYSHSPKPSSSAAFSAFASASNGAPAGRARELHLYNTKSRRKELFQPRVPGGEVGMYVCGVTPYDDSHIGHARAYVAFDVLYRYLRYLDHKVRYVRNFTDIDDKIIARANQLGEDPFSLSKRYSDDFLSDMANLHCLPPSVEPRVSDHIDQIINMIKQIIDNDCAYAIGGDVYFSVENFPEYGDLSGRKLDDNRAGERVAVDERKKNPADFALWKAAKDGEPSWDSPWGPGRPGWHIECSAMSAHYLGHSFDIHGGGEDLIFPHHENEIAQSRAACCDSSINYWIHNGFVNVNSQKMSKSLGNFVTIRKVTELYHPLALRMFLLGTHYRSPINYTIEQLNVASDRLYYTYQTLQDCEESCQQHQSKAGDPLPVNTTNCIQKLHDEFETSMSDDLHTSVALAAISEPLKVMNDLLHTRKGKKQEKRLESLSAMEEKIRMVLSVLGLLPSSYYEALQQLREKALRRASMTEEQVLQKIEERTSARKAKQYEKSDEIRKELAAVGIALMDGPDGTTWRPSVPLSEQGVVAST</sequence>